<organism>
    <name type="scientific">Clostridium perfringens (strain ATCC 13124 / DSM 756 / JCM 1290 / NCIMB 6125 / NCTC 8237 / Type A)</name>
    <dbReference type="NCBI Taxonomy" id="195103"/>
    <lineage>
        <taxon>Bacteria</taxon>
        <taxon>Bacillati</taxon>
        <taxon>Bacillota</taxon>
        <taxon>Clostridia</taxon>
        <taxon>Eubacteriales</taxon>
        <taxon>Clostridiaceae</taxon>
        <taxon>Clostridium</taxon>
    </lineage>
</organism>
<sequence>MEILKSMIDPKIVMAIVISFIVASILGPIIIPLLHKLKFGQNIRQEGPKSHLKKAGTPTIGGLIFIFATIITMFIMVGNPTDEAMIALYSFVGFGFVGFLDDLLKIIKKKNEGLTSGQKMILLLIVSGFLTWYAYKYIGTSINIPFLNGQINFGLFYIPFVMFYFAGVTNAVNLTDGLDGLATSVTVLVTTFLGIISYNLGHISLAIFCVALAGALLAFLRFNAFPARVFMGDTGSLALGGAVAMVALILKMPLILVLIGIIYVIETLSVILQVASFKLTGKRIFKMAPIHHHFEQLGWSETKIVSVFSIITVVFCFIAFASL</sequence>
<evidence type="ECO:0000255" key="1">
    <source>
        <dbReference type="HAMAP-Rule" id="MF_00038"/>
    </source>
</evidence>
<gene>
    <name evidence="1" type="primary">mraY</name>
    <name type="ordered locus">CPF_2114</name>
</gene>
<reference key="1">
    <citation type="journal article" date="2006" name="Genome Res.">
        <title>Skewed genomic variability in strains of the toxigenic bacterial pathogen, Clostridium perfringens.</title>
        <authorList>
            <person name="Myers G.S.A."/>
            <person name="Rasko D.A."/>
            <person name="Cheung J.K."/>
            <person name="Ravel J."/>
            <person name="Seshadri R."/>
            <person name="DeBoy R.T."/>
            <person name="Ren Q."/>
            <person name="Varga J."/>
            <person name="Awad M.M."/>
            <person name="Brinkac L.M."/>
            <person name="Daugherty S.C."/>
            <person name="Haft D.H."/>
            <person name="Dodson R.J."/>
            <person name="Madupu R."/>
            <person name="Nelson W.C."/>
            <person name="Rosovitz M.J."/>
            <person name="Sullivan S.A."/>
            <person name="Khouri H."/>
            <person name="Dimitrov G.I."/>
            <person name="Watkins K.L."/>
            <person name="Mulligan S."/>
            <person name="Benton J."/>
            <person name="Radune D."/>
            <person name="Fisher D.J."/>
            <person name="Atkins H.S."/>
            <person name="Hiscox T."/>
            <person name="Jost B.H."/>
            <person name="Billington S.J."/>
            <person name="Songer J.G."/>
            <person name="McClane B.A."/>
            <person name="Titball R.W."/>
            <person name="Rood J.I."/>
            <person name="Melville S.B."/>
            <person name="Paulsen I.T."/>
        </authorList>
    </citation>
    <scope>NUCLEOTIDE SEQUENCE [LARGE SCALE GENOMIC DNA]</scope>
    <source>
        <strain>ATCC 13124 / DSM 756 / JCM 1290 / NCIMB 6125 / NCTC 8237 / S 107 / Type A</strain>
    </source>
</reference>
<name>MRAY_CLOP1</name>
<protein>
    <recommendedName>
        <fullName evidence="1">Phospho-N-acetylmuramoyl-pentapeptide-transferase</fullName>
        <ecNumber evidence="1">2.7.8.13</ecNumber>
    </recommendedName>
    <alternativeName>
        <fullName evidence="1">UDP-MurNAc-pentapeptide phosphotransferase</fullName>
    </alternativeName>
</protein>
<proteinExistence type="inferred from homology"/>
<accession>Q0TP97</accession>
<keyword id="KW-0131">Cell cycle</keyword>
<keyword id="KW-0132">Cell division</keyword>
<keyword id="KW-1003">Cell membrane</keyword>
<keyword id="KW-0133">Cell shape</keyword>
<keyword id="KW-0961">Cell wall biogenesis/degradation</keyword>
<keyword id="KW-0460">Magnesium</keyword>
<keyword id="KW-0472">Membrane</keyword>
<keyword id="KW-0479">Metal-binding</keyword>
<keyword id="KW-0573">Peptidoglycan synthesis</keyword>
<keyword id="KW-0808">Transferase</keyword>
<keyword id="KW-0812">Transmembrane</keyword>
<keyword id="KW-1133">Transmembrane helix</keyword>
<dbReference type="EC" id="2.7.8.13" evidence="1"/>
<dbReference type="EMBL" id="CP000246">
    <property type="protein sequence ID" value="ABG83284.1"/>
    <property type="molecule type" value="Genomic_DNA"/>
</dbReference>
<dbReference type="RefSeq" id="WP_003458662.1">
    <property type="nucleotide sequence ID" value="NC_008261.1"/>
</dbReference>
<dbReference type="SMR" id="Q0TP97"/>
<dbReference type="STRING" id="195103.CPF_2114"/>
<dbReference type="PaxDb" id="195103-CPF_2114"/>
<dbReference type="GeneID" id="93001605"/>
<dbReference type="KEGG" id="cpf:CPF_2114"/>
<dbReference type="eggNOG" id="COG0472">
    <property type="taxonomic scope" value="Bacteria"/>
</dbReference>
<dbReference type="HOGENOM" id="CLU_023982_0_1_9"/>
<dbReference type="UniPathway" id="UPA00219"/>
<dbReference type="Proteomes" id="UP000001823">
    <property type="component" value="Chromosome"/>
</dbReference>
<dbReference type="GO" id="GO:0005886">
    <property type="term" value="C:plasma membrane"/>
    <property type="evidence" value="ECO:0007669"/>
    <property type="project" value="UniProtKB-SubCell"/>
</dbReference>
<dbReference type="GO" id="GO:0046872">
    <property type="term" value="F:metal ion binding"/>
    <property type="evidence" value="ECO:0007669"/>
    <property type="project" value="UniProtKB-KW"/>
</dbReference>
<dbReference type="GO" id="GO:0008963">
    <property type="term" value="F:phospho-N-acetylmuramoyl-pentapeptide-transferase activity"/>
    <property type="evidence" value="ECO:0007669"/>
    <property type="project" value="UniProtKB-UniRule"/>
</dbReference>
<dbReference type="GO" id="GO:0051992">
    <property type="term" value="F:UDP-N-acetylmuramoyl-L-alanyl-D-glutamyl-meso-2,6-diaminopimelyl-D-alanyl-D-alanine:undecaprenyl-phosphate transferase activity"/>
    <property type="evidence" value="ECO:0007669"/>
    <property type="project" value="RHEA"/>
</dbReference>
<dbReference type="GO" id="GO:0051301">
    <property type="term" value="P:cell division"/>
    <property type="evidence" value="ECO:0007669"/>
    <property type="project" value="UniProtKB-KW"/>
</dbReference>
<dbReference type="GO" id="GO:0071555">
    <property type="term" value="P:cell wall organization"/>
    <property type="evidence" value="ECO:0007669"/>
    <property type="project" value="UniProtKB-KW"/>
</dbReference>
<dbReference type="GO" id="GO:0009252">
    <property type="term" value="P:peptidoglycan biosynthetic process"/>
    <property type="evidence" value="ECO:0007669"/>
    <property type="project" value="UniProtKB-UniRule"/>
</dbReference>
<dbReference type="GO" id="GO:0008360">
    <property type="term" value="P:regulation of cell shape"/>
    <property type="evidence" value="ECO:0007669"/>
    <property type="project" value="UniProtKB-KW"/>
</dbReference>
<dbReference type="CDD" id="cd06852">
    <property type="entry name" value="GT_MraY"/>
    <property type="match status" value="1"/>
</dbReference>
<dbReference type="HAMAP" id="MF_00038">
    <property type="entry name" value="MraY"/>
    <property type="match status" value="1"/>
</dbReference>
<dbReference type="InterPro" id="IPR000715">
    <property type="entry name" value="Glycosyl_transferase_4"/>
</dbReference>
<dbReference type="InterPro" id="IPR003524">
    <property type="entry name" value="PNAcMuramoyl-5peptid_Trfase"/>
</dbReference>
<dbReference type="InterPro" id="IPR018480">
    <property type="entry name" value="PNAcMuramoyl-5peptid_Trfase_CS"/>
</dbReference>
<dbReference type="NCBIfam" id="TIGR00445">
    <property type="entry name" value="mraY"/>
    <property type="match status" value="1"/>
</dbReference>
<dbReference type="PANTHER" id="PTHR22926">
    <property type="entry name" value="PHOSPHO-N-ACETYLMURAMOYL-PENTAPEPTIDE-TRANSFERASE"/>
    <property type="match status" value="1"/>
</dbReference>
<dbReference type="PANTHER" id="PTHR22926:SF5">
    <property type="entry name" value="PHOSPHO-N-ACETYLMURAMOYL-PENTAPEPTIDE-TRANSFERASE HOMOLOG"/>
    <property type="match status" value="1"/>
</dbReference>
<dbReference type="Pfam" id="PF00953">
    <property type="entry name" value="Glycos_transf_4"/>
    <property type="match status" value="1"/>
</dbReference>
<dbReference type="PROSITE" id="PS01348">
    <property type="entry name" value="MRAY_2"/>
    <property type="match status" value="1"/>
</dbReference>
<comment type="function">
    <text evidence="1">Catalyzes the initial step of the lipid cycle reactions in the biosynthesis of the cell wall peptidoglycan: transfers peptidoglycan precursor phospho-MurNAc-pentapeptide from UDP-MurNAc-pentapeptide onto the lipid carrier undecaprenyl phosphate, yielding undecaprenyl-pyrophosphoryl-MurNAc-pentapeptide, known as lipid I.</text>
</comment>
<comment type="catalytic activity">
    <reaction evidence="1">
        <text>UDP-N-acetyl-alpha-D-muramoyl-L-alanyl-gamma-D-glutamyl-meso-2,6-diaminopimeloyl-D-alanyl-D-alanine + di-trans,octa-cis-undecaprenyl phosphate = di-trans,octa-cis-undecaprenyl diphospho-N-acetyl-alpha-D-muramoyl-L-alanyl-D-glutamyl-meso-2,6-diaminopimeloyl-D-alanyl-D-alanine + UMP</text>
        <dbReference type="Rhea" id="RHEA:28386"/>
        <dbReference type="ChEBI" id="CHEBI:57865"/>
        <dbReference type="ChEBI" id="CHEBI:60392"/>
        <dbReference type="ChEBI" id="CHEBI:61386"/>
        <dbReference type="ChEBI" id="CHEBI:61387"/>
        <dbReference type="EC" id="2.7.8.13"/>
    </reaction>
</comment>
<comment type="cofactor">
    <cofactor evidence="1">
        <name>Mg(2+)</name>
        <dbReference type="ChEBI" id="CHEBI:18420"/>
    </cofactor>
</comment>
<comment type="pathway">
    <text evidence="1">Cell wall biogenesis; peptidoglycan biosynthesis.</text>
</comment>
<comment type="subcellular location">
    <subcellularLocation>
        <location evidence="1">Cell membrane</location>
        <topology evidence="1">Multi-pass membrane protein</topology>
    </subcellularLocation>
</comment>
<comment type="similarity">
    <text evidence="1">Belongs to the glycosyltransferase 4 family. MraY subfamily.</text>
</comment>
<feature type="chain" id="PRO_0000332531" description="Phospho-N-acetylmuramoyl-pentapeptide-transferase">
    <location>
        <begin position="1"/>
        <end position="323"/>
    </location>
</feature>
<feature type="transmembrane region" description="Helical" evidence="1">
    <location>
        <begin position="12"/>
        <end position="32"/>
    </location>
</feature>
<feature type="transmembrane region" description="Helical" evidence="1">
    <location>
        <begin position="58"/>
        <end position="78"/>
    </location>
</feature>
<feature type="transmembrane region" description="Helical" evidence="1">
    <location>
        <begin position="84"/>
        <end position="104"/>
    </location>
</feature>
<feature type="transmembrane region" description="Helical" evidence="1">
    <location>
        <begin position="120"/>
        <end position="140"/>
    </location>
</feature>
<feature type="transmembrane region" description="Helical" evidence="1">
    <location>
        <begin position="151"/>
        <end position="171"/>
    </location>
</feature>
<feature type="transmembrane region" description="Helical" evidence="1">
    <location>
        <begin position="177"/>
        <end position="197"/>
    </location>
</feature>
<feature type="transmembrane region" description="Helical" evidence="1">
    <location>
        <begin position="200"/>
        <end position="220"/>
    </location>
</feature>
<feature type="transmembrane region" description="Helical" evidence="1">
    <location>
        <begin position="229"/>
        <end position="250"/>
    </location>
</feature>
<feature type="transmembrane region" description="Helical" evidence="1">
    <location>
        <begin position="303"/>
        <end position="323"/>
    </location>
</feature>